<comment type="function">
    <text evidence="1">One of the primary rRNA binding proteins, it binds specifically to the 5'-end of 16S ribosomal RNA.</text>
</comment>
<comment type="subunit">
    <text evidence="1">Part of the 30S ribosomal subunit.</text>
</comment>
<comment type="similarity">
    <text evidence="1">Belongs to the universal ribosomal protein uS17 family.</text>
</comment>
<dbReference type="EMBL" id="X55311">
    <property type="protein sequence ID" value="CAA39017.1"/>
    <property type="molecule type" value="Genomic_DNA"/>
</dbReference>
<dbReference type="EMBL" id="AY596297">
    <property type="protein sequence ID" value="AAV46520.1"/>
    <property type="molecule type" value="Genomic_DNA"/>
</dbReference>
<dbReference type="PIR" id="S10733">
    <property type="entry name" value="R3HS17"/>
</dbReference>
<dbReference type="RefSeq" id="WP_004591559.1">
    <property type="nucleotide sequence ID" value="NZ_CP039138.1"/>
</dbReference>
<dbReference type="SMR" id="P12741"/>
<dbReference type="STRING" id="272569.rrnAC1603"/>
<dbReference type="PaxDb" id="272569-rrnAC1603"/>
<dbReference type="EnsemblBacteria" id="AAV46520">
    <property type="protein sequence ID" value="AAV46520"/>
    <property type="gene ID" value="rrnAC1603"/>
</dbReference>
<dbReference type="KEGG" id="hma:rrnAC1603"/>
<dbReference type="PATRIC" id="fig|272569.17.peg.2292"/>
<dbReference type="eggNOG" id="arCOG04096">
    <property type="taxonomic scope" value="Archaea"/>
</dbReference>
<dbReference type="HOGENOM" id="CLU_073626_0_3_2"/>
<dbReference type="Proteomes" id="UP000001169">
    <property type="component" value="Chromosome I"/>
</dbReference>
<dbReference type="GO" id="GO:0022627">
    <property type="term" value="C:cytosolic small ribosomal subunit"/>
    <property type="evidence" value="ECO:0007669"/>
    <property type="project" value="TreeGrafter"/>
</dbReference>
<dbReference type="GO" id="GO:0019843">
    <property type="term" value="F:rRNA binding"/>
    <property type="evidence" value="ECO:0007669"/>
    <property type="project" value="UniProtKB-UniRule"/>
</dbReference>
<dbReference type="GO" id="GO:0003735">
    <property type="term" value="F:structural constituent of ribosome"/>
    <property type="evidence" value="ECO:0007669"/>
    <property type="project" value="InterPro"/>
</dbReference>
<dbReference type="GO" id="GO:0006412">
    <property type="term" value="P:translation"/>
    <property type="evidence" value="ECO:0007669"/>
    <property type="project" value="UniProtKB-UniRule"/>
</dbReference>
<dbReference type="CDD" id="cd00364">
    <property type="entry name" value="Ribosomal_uS17"/>
    <property type="match status" value="1"/>
</dbReference>
<dbReference type="FunFam" id="2.40.50.1000:FF:000005">
    <property type="entry name" value="30S ribosomal protein S17"/>
    <property type="match status" value="1"/>
</dbReference>
<dbReference type="Gene3D" id="2.40.50.1000">
    <property type="match status" value="1"/>
</dbReference>
<dbReference type="HAMAP" id="MF_01345_A">
    <property type="entry name" value="Ribosomal_uS17_A"/>
    <property type="match status" value="1"/>
</dbReference>
<dbReference type="InterPro" id="IPR012340">
    <property type="entry name" value="NA-bd_OB-fold"/>
</dbReference>
<dbReference type="InterPro" id="IPR000266">
    <property type="entry name" value="Ribosomal_uS17"/>
</dbReference>
<dbReference type="InterPro" id="IPR028333">
    <property type="entry name" value="Ribosomal_uS17_arc/euk"/>
</dbReference>
<dbReference type="InterPro" id="IPR019978">
    <property type="entry name" value="Ribosomal_uS17_archaeal"/>
</dbReference>
<dbReference type="InterPro" id="IPR019979">
    <property type="entry name" value="Ribosomal_uS17_CS"/>
</dbReference>
<dbReference type="NCBIfam" id="NF006345">
    <property type="entry name" value="PRK08572.1"/>
    <property type="match status" value="1"/>
</dbReference>
<dbReference type="NCBIfam" id="TIGR03630">
    <property type="entry name" value="uS17_arch"/>
    <property type="match status" value="1"/>
</dbReference>
<dbReference type="PANTHER" id="PTHR10744">
    <property type="entry name" value="40S RIBOSOMAL PROTEIN S11 FAMILY MEMBER"/>
    <property type="match status" value="1"/>
</dbReference>
<dbReference type="PANTHER" id="PTHR10744:SF9">
    <property type="entry name" value="40S RIBOSOMAL PROTEIN S11-RELATED"/>
    <property type="match status" value="1"/>
</dbReference>
<dbReference type="Pfam" id="PF00366">
    <property type="entry name" value="Ribosomal_S17"/>
    <property type="match status" value="1"/>
</dbReference>
<dbReference type="PRINTS" id="PR00973">
    <property type="entry name" value="RIBOSOMALS17"/>
</dbReference>
<dbReference type="SUPFAM" id="SSF50249">
    <property type="entry name" value="Nucleic acid-binding proteins"/>
    <property type="match status" value="1"/>
</dbReference>
<dbReference type="PROSITE" id="PS00056">
    <property type="entry name" value="RIBOSOMAL_S17"/>
    <property type="match status" value="1"/>
</dbReference>
<keyword id="KW-0903">Direct protein sequencing</keyword>
<keyword id="KW-1185">Reference proteome</keyword>
<keyword id="KW-0687">Ribonucleoprotein</keyword>
<keyword id="KW-0689">Ribosomal protein</keyword>
<keyword id="KW-0694">RNA-binding</keyword>
<keyword id="KW-0699">rRNA-binding</keyword>
<accession>P12741</accession>
<accession>Q5V1T2</accession>
<feature type="initiator methionine" description="Removed" evidence="2">
    <location>
        <position position="1"/>
    </location>
</feature>
<feature type="chain" id="PRO_0000128497" description="Small ribosomal subunit protein uS17">
    <location>
        <begin position="2"/>
        <end position="112"/>
    </location>
</feature>
<feature type="sequence conflict" description="In Ref. 1." evidence="3" ref="1">
    <original>C</original>
    <variation>S</variation>
    <location>
        <position position="89"/>
    </location>
</feature>
<feature type="sequence conflict" description="In Ref. 1." evidence="3" ref="1">
    <original>S</original>
    <variation>P</variation>
    <location>
        <position position="93"/>
    </location>
</feature>
<feature type="sequence conflict" description="In Ref. 1." evidence="3" ref="1">
    <location>
        <begin position="110"/>
        <end position="111"/>
    </location>
</feature>
<evidence type="ECO:0000255" key="1">
    <source>
        <dbReference type="HAMAP-Rule" id="MF_01345"/>
    </source>
</evidence>
<evidence type="ECO:0000269" key="2">
    <source>
    </source>
</evidence>
<evidence type="ECO:0000305" key="3"/>
<proteinExistence type="evidence at protein level"/>
<reference key="1">
    <citation type="journal article" date="1990" name="FEBS Lett.">
        <title>Nucleotide sequence of four genes encoding ribosomal proteins from the 'S10 and spectinomycin' operon equivalent region in the archaebacterium Halobacterium marismortui.</title>
        <authorList>
            <person name="Arndt E."/>
        </authorList>
    </citation>
    <scope>NUCLEOTIDE SEQUENCE [GENOMIC DNA]</scope>
</reference>
<reference key="2">
    <citation type="journal article" date="2004" name="Genome Res.">
        <title>Genome sequence of Haloarcula marismortui: a halophilic archaeon from the Dead Sea.</title>
        <authorList>
            <person name="Baliga N.S."/>
            <person name="Bonneau R."/>
            <person name="Facciotti M.T."/>
            <person name="Pan M."/>
            <person name="Glusman G."/>
            <person name="Deutsch E.W."/>
            <person name="Shannon P."/>
            <person name="Chiu Y."/>
            <person name="Weng R.S."/>
            <person name="Gan R.R."/>
            <person name="Hung P."/>
            <person name="Date S.V."/>
            <person name="Marcotte E."/>
            <person name="Hood L."/>
            <person name="Ng W.V."/>
        </authorList>
    </citation>
    <scope>NUCLEOTIDE SEQUENCE [LARGE SCALE GENOMIC DNA]</scope>
    <source>
        <strain>ATCC 43049 / DSM 3752 / JCM 8966 / VKM B-1809</strain>
    </source>
</reference>
<reference key="3">
    <citation type="journal article" date="1987" name="J. Biol. Chem.">
        <title>The primary structures of ribosomal proteins S14 and S16 from the archaebacterium Halobacterium marismortui. Comparison with eubacterial and eukaryotic ribosomal proteins.</title>
        <authorList>
            <person name="Kimura J."/>
            <person name="Kimura M."/>
        </authorList>
    </citation>
    <scope>PROTEIN SEQUENCE OF 2-112</scope>
</reference>
<organism>
    <name type="scientific">Haloarcula marismortui (strain ATCC 43049 / DSM 3752 / JCM 8966 / VKM B-1809)</name>
    <name type="common">Halobacterium marismortui</name>
    <dbReference type="NCBI Taxonomy" id="272569"/>
    <lineage>
        <taxon>Archaea</taxon>
        <taxon>Methanobacteriati</taxon>
        <taxon>Methanobacteriota</taxon>
        <taxon>Stenosarchaea group</taxon>
        <taxon>Halobacteria</taxon>
        <taxon>Halobacteriales</taxon>
        <taxon>Haloarculaceae</taxon>
        <taxon>Haloarcula</taxon>
    </lineage>
</organism>
<gene>
    <name evidence="1" type="primary">rps17</name>
    <name type="ordered locus">rrnAC1603</name>
</gene>
<sequence length="112" mass="12272">MALGLNVQEPEETCADQNCPFHGELSVRGQTLNGEVASTDMEKTVVVEREYDVKVPKYDRFMKRRSRVPAHAPDCLDLAVGDTVTIAECRPLSKTKSHVVVGVVADEQDGDA</sequence>
<name>RS17_HALMA</name>
<protein>
    <recommendedName>
        <fullName evidence="1">Small ribosomal subunit protein uS17</fullName>
    </recommendedName>
    <alternativeName>
        <fullName evidence="3">30S ribosomal protein S17</fullName>
    </alternativeName>
    <alternativeName>
        <fullName>HS14</fullName>
    </alternativeName>
    <alternativeName>
        <fullName>HmaS17</fullName>
    </alternativeName>
</protein>